<name>FKBP_CANAL</name>
<reference key="1">
    <citation type="journal article" date="1992" name="Gene">
        <title>Cloning and sequence analysis of a rapamycin-binding protein-encoding gene (RBP1) from Candida albicans.</title>
        <authorList>
            <person name="Ferrara A."/>
            <person name="Cafferkey R."/>
            <person name="Vivi G.P."/>
        </authorList>
    </citation>
    <scope>NUCLEOTIDE SEQUENCE [GENOMIC DNA]</scope>
    <scope>CATALYTIC ACTIVITY</scope>
    <scope>ACTIVITY REGULATION</scope>
</reference>
<reference key="2">
    <citation type="journal article" date="2005" name="Genetics">
        <title>Sequence finishing and gene mapping for Candida albicans chromosome 7 and syntenic analysis against the Saccharomyces cerevisiae genome.</title>
        <authorList>
            <person name="Chibana H."/>
            <person name="Oka N."/>
            <person name="Nakayama H."/>
            <person name="Aoyama T."/>
            <person name="Magee B.B."/>
            <person name="Magee P.T."/>
            <person name="Mikami Y."/>
        </authorList>
    </citation>
    <scope>NUCLEOTIDE SEQUENCE [LARGE SCALE GENOMIC DNA] (RBP2)</scope>
    <source>
        <strain>SC5314 / ATCC MYA-2876</strain>
    </source>
</reference>
<reference key="3">
    <citation type="journal article" date="2004" name="Proc. Natl. Acad. Sci. U.S.A.">
        <title>The diploid genome sequence of Candida albicans.</title>
        <authorList>
            <person name="Jones T."/>
            <person name="Federspiel N.A."/>
            <person name="Chibana H."/>
            <person name="Dungan J."/>
            <person name="Kalman S."/>
            <person name="Magee B.B."/>
            <person name="Newport G."/>
            <person name="Thorstenson Y.R."/>
            <person name="Agabian N."/>
            <person name="Magee P.T."/>
            <person name="Davis R.W."/>
            <person name="Scherer S."/>
        </authorList>
    </citation>
    <scope>NUCLEOTIDE SEQUENCE [LARGE SCALE GENOMIC DNA] (RBP1 AND RBP2)</scope>
    <source>
        <strain>SC5314 / ATCC MYA-2876</strain>
    </source>
</reference>
<reference key="4">
    <citation type="journal article" date="2007" name="Genome Biol.">
        <title>Assembly of the Candida albicans genome into sixteen supercontigs aligned on the eight chromosomes.</title>
        <authorList>
            <person name="van het Hoog M."/>
            <person name="Rast T.J."/>
            <person name="Martchenko M."/>
            <person name="Grindle S."/>
            <person name="Dignard D."/>
            <person name="Hogues H."/>
            <person name="Cuomo C."/>
            <person name="Berriman M."/>
            <person name="Scherer S."/>
            <person name="Magee B.B."/>
            <person name="Whiteway M."/>
            <person name="Chibana H."/>
            <person name="Nantel A."/>
            <person name="Magee P.T."/>
        </authorList>
    </citation>
    <scope>GENOME REANNOTATION</scope>
    <source>
        <strain>SC5314 / ATCC MYA-2876</strain>
    </source>
</reference>
<reference key="5">
    <citation type="journal article" date="2013" name="Genome Biol.">
        <title>Assembly of a phased diploid Candida albicans genome facilitates allele-specific measurements and provides a simple model for repeat and indel structure.</title>
        <authorList>
            <person name="Muzzey D."/>
            <person name="Schwartz K."/>
            <person name="Weissman J.S."/>
            <person name="Sherlock G."/>
        </authorList>
    </citation>
    <scope>NUCLEOTIDE SEQUENCE [LARGE SCALE GENOMIC DNA]</scope>
    <scope>GENOME REANNOTATION</scope>
    <source>
        <strain>SC5314 / ATCC MYA-2876</strain>
    </source>
</reference>
<gene>
    <name type="primary">RBP1</name>
    <name type="synonym">RBP11</name>
    <name type="ORF">CaO19.11186</name>
    <name type="ORF">CaO19.3702</name>
</gene>
<gene>
    <name type="primary">RBP2</name>
    <name type="synonym">RBP12</name>
    <name type="ordered locus">CAALFM_C702570CA</name>
    <name type="ORF">CaJ7.0299</name>
    <name type="ORF">CaO19.13810</name>
    <name type="ORF">CaO19.6452</name>
</gene>
<feature type="chain" id="PRO_0000075302" description="FK506-binding protein 1">
    <location>
        <begin position="1"/>
        <end position="124"/>
    </location>
</feature>
<feature type="domain" description="PPIase FKBP-type" evidence="1">
    <location>
        <begin position="23"/>
        <end position="122"/>
    </location>
</feature>
<feature type="sequence conflict" description="In Ref. 1; AAA34367." evidence="2" ref="1">
    <original>P</original>
    <variation>G</variation>
    <location>
        <position position="92"/>
    </location>
</feature>
<feature type="strand" evidence="4">
    <location>
        <begin position="7"/>
        <end position="12"/>
    </location>
</feature>
<feature type="strand" evidence="4">
    <location>
        <begin position="25"/>
        <end position="34"/>
    </location>
</feature>
<feature type="strand" evidence="4">
    <location>
        <begin position="39"/>
        <end position="43"/>
    </location>
</feature>
<feature type="turn" evidence="4">
    <location>
        <begin position="44"/>
        <end position="47"/>
    </location>
</feature>
<feature type="strand" evidence="4">
    <location>
        <begin position="50"/>
        <end position="53"/>
    </location>
</feature>
<feature type="strand" evidence="4">
    <location>
        <begin position="55"/>
        <end position="59"/>
    </location>
</feature>
<feature type="helix" evidence="4">
    <location>
        <begin position="61"/>
        <end position="67"/>
    </location>
</feature>
<feature type="turn" evidence="4">
    <location>
        <begin position="68"/>
        <end position="73"/>
    </location>
</feature>
<feature type="strand" evidence="4">
    <location>
        <begin position="86"/>
        <end position="91"/>
    </location>
</feature>
<feature type="helix" evidence="4">
    <location>
        <begin position="93"/>
        <end position="95"/>
    </location>
</feature>
<feature type="turn" evidence="4">
    <location>
        <begin position="96"/>
        <end position="100"/>
    </location>
</feature>
<feature type="turn" evidence="4">
    <location>
        <begin position="103"/>
        <end position="105"/>
    </location>
</feature>
<feature type="strand" evidence="4">
    <location>
        <begin position="112"/>
        <end position="121"/>
    </location>
</feature>
<sequence>MSEELPQIEIVQEGDNTTFAKPGDTVTIHYDGKLTNGKEFDSSRKRGKPFTCTVGVGQVIKGWDISLTNNYGKGGANLPKISKGTKAILTIPPNLAYGPRGIPPIIGPNETLVFEVELLGVNGQ</sequence>
<protein>
    <recommendedName>
        <fullName>FK506-binding protein 1</fullName>
        <shortName>FKBP</shortName>
        <ecNumber evidence="3">5.2.1.8</ecNumber>
    </recommendedName>
    <alternativeName>
        <fullName>Peptidyl-prolyl cis-trans isomerase</fullName>
        <shortName>PPIase</shortName>
    </alternativeName>
    <alternativeName>
        <fullName>Rapamycin-binding protein</fullName>
    </alternativeName>
</protein>
<accession>P28870</accession>
<accession>A0A1D8PR51</accession>
<accession>Q3MP88</accession>
<accession>Q59LZ3</accession>
<dbReference type="EC" id="5.2.1.8" evidence="3"/>
<dbReference type="EMBL" id="M84759">
    <property type="protein sequence ID" value="AAA34367.1"/>
    <property type="molecule type" value="Genomic_DNA"/>
</dbReference>
<dbReference type="EMBL" id="AP006852">
    <property type="protein sequence ID" value="BAE44772.1"/>
    <property type="molecule type" value="Genomic_DNA"/>
</dbReference>
<dbReference type="EMBL" id="CP017629">
    <property type="protein sequence ID" value="AOW30615.1"/>
    <property type="molecule type" value="Genomic_DNA"/>
</dbReference>
<dbReference type="PIR" id="JN0320">
    <property type="entry name" value="JN0320"/>
</dbReference>
<dbReference type="RefSeq" id="XP_710751.1">
    <property type="nucleotide sequence ID" value="XM_705659.2"/>
</dbReference>
<dbReference type="PDB" id="5HTG">
    <property type="method" value="X-ray"/>
    <property type="resolution" value="2.40 A"/>
    <property type="chains" value="A/B=3-124"/>
</dbReference>
<dbReference type="PDB" id="5HW6">
    <property type="method" value="X-ray"/>
    <property type="resolution" value="2.40 A"/>
    <property type="chains" value="A/B=3-124"/>
</dbReference>
<dbReference type="PDB" id="5HW7">
    <property type="method" value="X-ray"/>
    <property type="resolution" value="2.29 A"/>
    <property type="chains" value="A/B=3-124"/>
</dbReference>
<dbReference type="PDB" id="5HW8">
    <property type="method" value="X-ray"/>
    <property type="resolution" value="2.86 A"/>
    <property type="chains" value="A/B/C/D/E/F/G/H=3-124"/>
</dbReference>
<dbReference type="PDB" id="5I98">
    <property type="method" value="X-ray"/>
    <property type="resolution" value="2.00 A"/>
    <property type="chains" value="A/B=3-122"/>
</dbReference>
<dbReference type="PDB" id="6TZ6">
    <property type="method" value="X-ray"/>
    <property type="resolution" value="2.55 A"/>
    <property type="chains" value="C/F=1-124"/>
</dbReference>
<dbReference type="PDBsum" id="5HTG"/>
<dbReference type="PDBsum" id="5HW6"/>
<dbReference type="PDBsum" id="5HW7"/>
<dbReference type="PDBsum" id="5HW8"/>
<dbReference type="PDBsum" id="5I98"/>
<dbReference type="PDBsum" id="6TZ6"/>
<dbReference type="SMR" id="P28870"/>
<dbReference type="BioGRID" id="1220109">
    <property type="interactions" value="2"/>
</dbReference>
<dbReference type="FunCoup" id="P28870">
    <property type="interactions" value="402"/>
</dbReference>
<dbReference type="STRING" id="237561.P28870"/>
<dbReference type="EnsemblFungi" id="C7_02570C_A-T">
    <property type="protein sequence ID" value="C7_02570C_A-T-p1"/>
    <property type="gene ID" value="C7_02570C_A"/>
</dbReference>
<dbReference type="GeneID" id="3647647"/>
<dbReference type="KEGG" id="cal:CAALFM_C702570CA"/>
<dbReference type="CGD" id="CAL0000188340">
    <property type="gene designation" value="RBP1"/>
</dbReference>
<dbReference type="VEuPathDB" id="FungiDB:C7_02570C_A"/>
<dbReference type="eggNOG" id="KOG0544">
    <property type="taxonomic scope" value="Eukaryota"/>
</dbReference>
<dbReference type="HOGENOM" id="CLU_013615_12_0_1"/>
<dbReference type="InParanoid" id="P28870"/>
<dbReference type="OMA" id="EQFDASW"/>
<dbReference type="OrthoDB" id="1902587at2759"/>
<dbReference type="Proteomes" id="UP000000559">
    <property type="component" value="Chromosome 7"/>
</dbReference>
<dbReference type="GO" id="GO:0005737">
    <property type="term" value="C:cytoplasm"/>
    <property type="evidence" value="ECO:0000318"/>
    <property type="project" value="GO_Central"/>
</dbReference>
<dbReference type="GO" id="GO:0005576">
    <property type="term" value="C:extracellular region"/>
    <property type="evidence" value="ECO:0000314"/>
    <property type="project" value="CGD"/>
</dbReference>
<dbReference type="GO" id="GO:0062040">
    <property type="term" value="C:fungal biofilm matrix"/>
    <property type="evidence" value="ECO:0000314"/>
    <property type="project" value="CGD"/>
</dbReference>
<dbReference type="GO" id="GO:0001228">
    <property type="term" value="F:DNA-binding transcription activator activity, RNA polymerase II-specific"/>
    <property type="evidence" value="ECO:0007669"/>
    <property type="project" value="EnsemblFungi"/>
</dbReference>
<dbReference type="GO" id="GO:0005527">
    <property type="term" value="F:macrolide binding"/>
    <property type="evidence" value="ECO:0007669"/>
    <property type="project" value="EnsemblFungi"/>
</dbReference>
<dbReference type="GO" id="GO:0003755">
    <property type="term" value="F:peptidyl-prolyl cis-trans isomerase activity"/>
    <property type="evidence" value="ECO:0000316"/>
    <property type="project" value="CGD"/>
</dbReference>
<dbReference type="GO" id="GO:0044183">
    <property type="term" value="F:protein folding chaperone"/>
    <property type="evidence" value="ECO:0007669"/>
    <property type="project" value="EnsemblFungi"/>
</dbReference>
<dbReference type="GO" id="GO:0006325">
    <property type="term" value="P:chromatin organization"/>
    <property type="evidence" value="ECO:0007669"/>
    <property type="project" value="EnsemblFungi"/>
</dbReference>
<dbReference type="GO" id="GO:1901711">
    <property type="term" value="P:negative regulation of homoserine biosynthetic process"/>
    <property type="evidence" value="ECO:0007669"/>
    <property type="project" value="EnsemblFungi"/>
</dbReference>
<dbReference type="GO" id="GO:0070651">
    <property type="term" value="P:nonfunctional rRNA decay"/>
    <property type="evidence" value="ECO:0007669"/>
    <property type="project" value="EnsemblFungi"/>
</dbReference>
<dbReference type="GO" id="GO:1903644">
    <property type="term" value="P:regulation of chaperone-mediated protein folding"/>
    <property type="evidence" value="ECO:0007669"/>
    <property type="project" value="EnsemblFungi"/>
</dbReference>
<dbReference type="GO" id="GO:0006366">
    <property type="term" value="P:transcription by RNA polymerase II"/>
    <property type="evidence" value="ECO:0007669"/>
    <property type="project" value="EnsemblFungi"/>
</dbReference>
<dbReference type="FunFam" id="3.10.50.40:FF:000061">
    <property type="entry name" value="FK506-binding protein 1"/>
    <property type="match status" value="1"/>
</dbReference>
<dbReference type="Gene3D" id="3.10.50.40">
    <property type="match status" value="1"/>
</dbReference>
<dbReference type="InterPro" id="IPR050689">
    <property type="entry name" value="FKBP-type_PPIase"/>
</dbReference>
<dbReference type="InterPro" id="IPR046357">
    <property type="entry name" value="PPIase_dom_sf"/>
</dbReference>
<dbReference type="InterPro" id="IPR001179">
    <property type="entry name" value="PPIase_FKBP_dom"/>
</dbReference>
<dbReference type="PANTHER" id="PTHR10516:SF443">
    <property type="entry name" value="FK506-BINDING PROTEIN 59-RELATED"/>
    <property type="match status" value="1"/>
</dbReference>
<dbReference type="PANTHER" id="PTHR10516">
    <property type="entry name" value="PEPTIDYL-PROLYL CIS-TRANS ISOMERASE"/>
    <property type="match status" value="1"/>
</dbReference>
<dbReference type="Pfam" id="PF00254">
    <property type="entry name" value="FKBP_C"/>
    <property type="match status" value="1"/>
</dbReference>
<dbReference type="SUPFAM" id="SSF54534">
    <property type="entry name" value="FKBP-like"/>
    <property type="match status" value="1"/>
</dbReference>
<dbReference type="PROSITE" id="PS50059">
    <property type="entry name" value="FKBP_PPIASE"/>
    <property type="match status" value="1"/>
</dbReference>
<comment type="function">
    <text>PPIases accelerate the folding of proteins. It catalyzes the cis-trans isomerization of proline imidic peptide bonds in oligopeptides.</text>
</comment>
<comment type="catalytic activity">
    <reaction evidence="3">
        <text>[protein]-peptidylproline (omega=180) = [protein]-peptidylproline (omega=0)</text>
        <dbReference type="Rhea" id="RHEA:16237"/>
        <dbReference type="Rhea" id="RHEA-COMP:10747"/>
        <dbReference type="Rhea" id="RHEA-COMP:10748"/>
        <dbReference type="ChEBI" id="CHEBI:83833"/>
        <dbReference type="ChEBI" id="CHEBI:83834"/>
        <dbReference type="EC" id="5.2.1.8"/>
    </reaction>
</comment>
<comment type="activity regulation">
    <text evidence="3">Inhibited by rapamycin.</text>
</comment>
<comment type="subcellular location">
    <subcellularLocation>
        <location>Cytoplasm</location>
    </subcellularLocation>
</comment>
<comment type="similarity">
    <text evidence="2">Belongs to the FKBP-type PPIase family. FKBP1 subfamily.</text>
</comment>
<keyword id="KW-0002">3D-structure</keyword>
<keyword id="KW-0963">Cytoplasm</keyword>
<keyword id="KW-0413">Isomerase</keyword>
<keyword id="KW-1185">Reference proteome</keyword>
<keyword id="KW-0697">Rotamase</keyword>
<proteinExistence type="evidence at protein level"/>
<organism>
    <name type="scientific">Candida albicans (strain SC5314 / ATCC MYA-2876)</name>
    <name type="common">Yeast</name>
    <dbReference type="NCBI Taxonomy" id="237561"/>
    <lineage>
        <taxon>Eukaryota</taxon>
        <taxon>Fungi</taxon>
        <taxon>Dikarya</taxon>
        <taxon>Ascomycota</taxon>
        <taxon>Saccharomycotina</taxon>
        <taxon>Pichiomycetes</taxon>
        <taxon>Debaryomycetaceae</taxon>
        <taxon>Candida/Lodderomyces clade</taxon>
        <taxon>Candida</taxon>
    </lineage>
</organism>
<evidence type="ECO:0000255" key="1">
    <source>
        <dbReference type="PROSITE-ProRule" id="PRU00277"/>
    </source>
</evidence>
<evidence type="ECO:0000305" key="2"/>
<evidence type="ECO:0000305" key="3">
    <source>
    </source>
</evidence>
<evidence type="ECO:0007829" key="4">
    <source>
        <dbReference type="PDB" id="5I98"/>
    </source>
</evidence>